<accession>Q7HIU1</accession>
<name>PSBF_SAGLA</name>
<evidence type="ECO:0000255" key="1">
    <source>
        <dbReference type="HAMAP-Rule" id="MF_00643"/>
    </source>
</evidence>
<reference key="1">
    <citation type="submission" date="2000-02" db="EMBL/GenBank/DDBJ databases">
        <title>Long branches in the seed plants and the root of the angiosperms.</title>
        <authorList>
            <person name="Graham S.W."/>
            <person name="Reeves P.A."/>
            <person name="Burns A."/>
            <person name="Olmstead R.G."/>
        </authorList>
    </citation>
    <scope>NUCLEOTIDE SEQUENCE [GENOMIC DNA]</scope>
</reference>
<organism>
    <name type="scientific">Sagittaria latifolia</name>
    <name type="common">Broadleaf arrowhead</name>
    <name type="synonym">Sagittaria chinensis</name>
    <dbReference type="NCBI Taxonomy" id="15008"/>
    <lineage>
        <taxon>Eukaryota</taxon>
        <taxon>Viridiplantae</taxon>
        <taxon>Streptophyta</taxon>
        <taxon>Embryophyta</taxon>
        <taxon>Tracheophyta</taxon>
        <taxon>Spermatophyta</taxon>
        <taxon>Magnoliopsida</taxon>
        <taxon>Liliopsida</taxon>
        <taxon>Alismataceae</taxon>
        <taxon>Sagittaria</taxon>
    </lineage>
</organism>
<gene>
    <name evidence="1" type="primary">psbF</name>
</gene>
<sequence length="39" mass="4424">MTIDRTYPIFTVRWLAVHGLAVPTVSFLGSISAMQFIQR</sequence>
<comment type="function">
    <text evidence="1">This b-type cytochrome is tightly associated with the reaction center of photosystem II (PSII). PSII is a light-driven water:plastoquinone oxidoreductase that uses light energy to abstract electrons from H(2)O, generating O(2) and a proton gradient subsequently used for ATP formation. It consists of a core antenna complex that captures photons, and an electron transfer chain that converts photonic excitation into a charge separation.</text>
</comment>
<comment type="cofactor">
    <cofactor evidence="1">
        <name>heme b</name>
        <dbReference type="ChEBI" id="CHEBI:60344"/>
    </cofactor>
    <text evidence="1">With its partner (PsbE) binds heme. PSII binds additional chlorophylls, carotenoids and specific lipids.</text>
</comment>
<comment type="subunit">
    <text evidence="1">Heterodimer of an alpha subunit and a beta subunit. PSII is composed of 1 copy each of membrane proteins PsbA, PsbB, PsbC, PsbD, PsbE, PsbF, PsbH, PsbI, PsbJ, PsbK, PsbL, PsbM, PsbT, PsbX, PsbY, PsbZ, Psb30/Ycf12, at least 3 peripheral proteins of the oxygen-evolving complex and a large number of cofactors. It forms dimeric complexes.</text>
</comment>
<comment type="subcellular location">
    <subcellularLocation>
        <location evidence="1">Plastid</location>
        <location evidence="1">Chloroplast thylakoid membrane</location>
        <topology evidence="1">Single-pass membrane protein</topology>
    </subcellularLocation>
</comment>
<comment type="similarity">
    <text evidence="1">Belongs to the PsbE/PsbF family.</text>
</comment>
<protein>
    <recommendedName>
        <fullName evidence="1">Cytochrome b559 subunit beta</fullName>
    </recommendedName>
    <alternativeName>
        <fullName evidence="1">PSII reaction center subunit VI</fullName>
    </alternativeName>
</protein>
<geneLocation type="chloroplast"/>
<proteinExistence type="inferred from homology"/>
<keyword id="KW-0150">Chloroplast</keyword>
<keyword id="KW-0249">Electron transport</keyword>
<keyword id="KW-0349">Heme</keyword>
<keyword id="KW-0408">Iron</keyword>
<keyword id="KW-0472">Membrane</keyword>
<keyword id="KW-0479">Metal-binding</keyword>
<keyword id="KW-0602">Photosynthesis</keyword>
<keyword id="KW-0604">Photosystem II</keyword>
<keyword id="KW-0934">Plastid</keyword>
<keyword id="KW-0793">Thylakoid</keyword>
<keyword id="KW-0812">Transmembrane</keyword>
<keyword id="KW-1133">Transmembrane helix</keyword>
<keyword id="KW-0813">Transport</keyword>
<feature type="chain" id="PRO_0000200447" description="Cytochrome b559 subunit beta">
    <location>
        <begin position="1"/>
        <end position="39"/>
    </location>
</feature>
<feature type="transmembrane region" description="Helical" evidence="1">
    <location>
        <begin position="14"/>
        <end position="30"/>
    </location>
</feature>
<feature type="binding site" description="axial binding residue" evidence="1">
    <location>
        <position position="18"/>
    </location>
    <ligand>
        <name>heme</name>
        <dbReference type="ChEBI" id="CHEBI:30413"/>
        <note>ligand shared with alpha subunit</note>
    </ligand>
    <ligandPart>
        <name>Fe</name>
        <dbReference type="ChEBI" id="CHEBI:18248"/>
    </ligandPart>
</feature>
<dbReference type="EMBL" id="AY007484">
    <property type="protein sequence ID" value="AAG27019.1"/>
    <property type="molecule type" value="Genomic_DNA"/>
</dbReference>
<dbReference type="SMR" id="Q7HIU1"/>
<dbReference type="GO" id="GO:0009535">
    <property type="term" value="C:chloroplast thylakoid membrane"/>
    <property type="evidence" value="ECO:0007669"/>
    <property type="project" value="UniProtKB-SubCell"/>
</dbReference>
<dbReference type="GO" id="GO:0009539">
    <property type="term" value="C:photosystem II reaction center"/>
    <property type="evidence" value="ECO:0007669"/>
    <property type="project" value="InterPro"/>
</dbReference>
<dbReference type="GO" id="GO:0009055">
    <property type="term" value="F:electron transfer activity"/>
    <property type="evidence" value="ECO:0007669"/>
    <property type="project" value="UniProtKB-UniRule"/>
</dbReference>
<dbReference type="GO" id="GO:0020037">
    <property type="term" value="F:heme binding"/>
    <property type="evidence" value="ECO:0007669"/>
    <property type="project" value="InterPro"/>
</dbReference>
<dbReference type="GO" id="GO:0005506">
    <property type="term" value="F:iron ion binding"/>
    <property type="evidence" value="ECO:0007669"/>
    <property type="project" value="UniProtKB-UniRule"/>
</dbReference>
<dbReference type="GO" id="GO:0009767">
    <property type="term" value="P:photosynthetic electron transport chain"/>
    <property type="evidence" value="ECO:0007669"/>
    <property type="project" value="InterPro"/>
</dbReference>
<dbReference type="HAMAP" id="MF_00643">
    <property type="entry name" value="PSII_PsbF"/>
    <property type="match status" value="1"/>
</dbReference>
<dbReference type="InterPro" id="IPR006241">
    <property type="entry name" value="PSII_cyt_b559_bsu"/>
</dbReference>
<dbReference type="InterPro" id="IPR006216">
    <property type="entry name" value="PSII_cyt_b559_CS"/>
</dbReference>
<dbReference type="InterPro" id="IPR013081">
    <property type="entry name" value="PSII_cyt_b559_N"/>
</dbReference>
<dbReference type="NCBIfam" id="TIGR01333">
    <property type="entry name" value="cyt_b559_beta"/>
    <property type="match status" value="1"/>
</dbReference>
<dbReference type="Pfam" id="PF00283">
    <property type="entry name" value="Cytochrom_B559"/>
    <property type="match status" value="1"/>
</dbReference>
<dbReference type="PIRSF" id="PIRSF000037">
    <property type="entry name" value="PsbF"/>
    <property type="match status" value="1"/>
</dbReference>
<dbReference type="SUPFAM" id="SSF161045">
    <property type="entry name" value="Cytochrome b559 subunits"/>
    <property type="match status" value="1"/>
</dbReference>
<dbReference type="PROSITE" id="PS00537">
    <property type="entry name" value="CYTOCHROME_B559"/>
    <property type="match status" value="1"/>
</dbReference>